<gene>
    <name evidence="1" type="primary">recA</name>
    <name type="ordered locus">YPN_0787</name>
    <name type="ORF">YP516_0839</name>
</gene>
<dbReference type="EMBL" id="CP000305">
    <property type="protein sequence ID" value="ABG17119.1"/>
    <property type="molecule type" value="Genomic_DNA"/>
</dbReference>
<dbReference type="EMBL" id="ACNQ01000007">
    <property type="protein sequence ID" value="EEO77986.1"/>
    <property type="molecule type" value="Genomic_DNA"/>
</dbReference>
<dbReference type="RefSeq" id="WP_002209446.1">
    <property type="nucleotide sequence ID" value="NZ_ACNQ01000007.1"/>
</dbReference>
<dbReference type="SMR" id="Q1CLL1"/>
<dbReference type="GeneID" id="57975402"/>
<dbReference type="KEGG" id="ypn:YPN_0787"/>
<dbReference type="HOGENOM" id="CLU_040469_3_2_6"/>
<dbReference type="Proteomes" id="UP000008936">
    <property type="component" value="Chromosome"/>
</dbReference>
<dbReference type="GO" id="GO:0005829">
    <property type="term" value="C:cytosol"/>
    <property type="evidence" value="ECO:0007669"/>
    <property type="project" value="TreeGrafter"/>
</dbReference>
<dbReference type="GO" id="GO:0005524">
    <property type="term" value="F:ATP binding"/>
    <property type="evidence" value="ECO:0007669"/>
    <property type="project" value="UniProtKB-UniRule"/>
</dbReference>
<dbReference type="GO" id="GO:0016887">
    <property type="term" value="F:ATP hydrolysis activity"/>
    <property type="evidence" value="ECO:0007669"/>
    <property type="project" value="InterPro"/>
</dbReference>
<dbReference type="GO" id="GO:0140664">
    <property type="term" value="F:ATP-dependent DNA damage sensor activity"/>
    <property type="evidence" value="ECO:0007669"/>
    <property type="project" value="InterPro"/>
</dbReference>
<dbReference type="GO" id="GO:0003684">
    <property type="term" value="F:damaged DNA binding"/>
    <property type="evidence" value="ECO:0007669"/>
    <property type="project" value="UniProtKB-UniRule"/>
</dbReference>
<dbReference type="GO" id="GO:0003697">
    <property type="term" value="F:single-stranded DNA binding"/>
    <property type="evidence" value="ECO:0007669"/>
    <property type="project" value="UniProtKB-UniRule"/>
</dbReference>
<dbReference type="GO" id="GO:0006310">
    <property type="term" value="P:DNA recombination"/>
    <property type="evidence" value="ECO:0007669"/>
    <property type="project" value="UniProtKB-UniRule"/>
</dbReference>
<dbReference type="GO" id="GO:0006281">
    <property type="term" value="P:DNA repair"/>
    <property type="evidence" value="ECO:0007669"/>
    <property type="project" value="UniProtKB-UniRule"/>
</dbReference>
<dbReference type="GO" id="GO:0009432">
    <property type="term" value="P:SOS response"/>
    <property type="evidence" value="ECO:0007669"/>
    <property type="project" value="UniProtKB-UniRule"/>
</dbReference>
<dbReference type="CDD" id="cd00983">
    <property type="entry name" value="RecA"/>
    <property type="match status" value="1"/>
</dbReference>
<dbReference type="FunFam" id="3.40.50.300:FF:000087">
    <property type="entry name" value="Recombinase RecA"/>
    <property type="match status" value="1"/>
</dbReference>
<dbReference type="Gene3D" id="3.40.50.300">
    <property type="entry name" value="P-loop containing nucleotide triphosphate hydrolases"/>
    <property type="match status" value="1"/>
</dbReference>
<dbReference type="HAMAP" id="MF_00268">
    <property type="entry name" value="RecA"/>
    <property type="match status" value="1"/>
</dbReference>
<dbReference type="InterPro" id="IPR003593">
    <property type="entry name" value="AAA+_ATPase"/>
</dbReference>
<dbReference type="InterPro" id="IPR013765">
    <property type="entry name" value="DNA_recomb/repair_RecA"/>
</dbReference>
<dbReference type="InterPro" id="IPR020584">
    <property type="entry name" value="DNA_recomb/repair_RecA_CS"/>
</dbReference>
<dbReference type="InterPro" id="IPR027417">
    <property type="entry name" value="P-loop_NTPase"/>
</dbReference>
<dbReference type="InterPro" id="IPR049261">
    <property type="entry name" value="RecA-like_C"/>
</dbReference>
<dbReference type="InterPro" id="IPR049428">
    <property type="entry name" value="RecA-like_N"/>
</dbReference>
<dbReference type="InterPro" id="IPR020588">
    <property type="entry name" value="RecA_ATP-bd"/>
</dbReference>
<dbReference type="InterPro" id="IPR023400">
    <property type="entry name" value="RecA_C_sf"/>
</dbReference>
<dbReference type="InterPro" id="IPR020587">
    <property type="entry name" value="RecA_monomer-monomer_interface"/>
</dbReference>
<dbReference type="NCBIfam" id="TIGR02012">
    <property type="entry name" value="tigrfam_recA"/>
    <property type="match status" value="1"/>
</dbReference>
<dbReference type="PANTHER" id="PTHR45900:SF1">
    <property type="entry name" value="MITOCHONDRIAL DNA REPAIR PROTEIN RECA HOMOLOG-RELATED"/>
    <property type="match status" value="1"/>
</dbReference>
<dbReference type="PANTHER" id="PTHR45900">
    <property type="entry name" value="RECA"/>
    <property type="match status" value="1"/>
</dbReference>
<dbReference type="Pfam" id="PF00154">
    <property type="entry name" value="RecA"/>
    <property type="match status" value="1"/>
</dbReference>
<dbReference type="Pfam" id="PF21096">
    <property type="entry name" value="RecA_C"/>
    <property type="match status" value="1"/>
</dbReference>
<dbReference type="PRINTS" id="PR00142">
    <property type="entry name" value="RECA"/>
</dbReference>
<dbReference type="SMART" id="SM00382">
    <property type="entry name" value="AAA"/>
    <property type="match status" value="1"/>
</dbReference>
<dbReference type="SUPFAM" id="SSF52540">
    <property type="entry name" value="P-loop containing nucleoside triphosphate hydrolases"/>
    <property type="match status" value="1"/>
</dbReference>
<dbReference type="SUPFAM" id="SSF54752">
    <property type="entry name" value="RecA protein, C-terminal domain"/>
    <property type="match status" value="1"/>
</dbReference>
<dbReference type="PROSITE" id="PS00321">
    <property type="entry name" value="RECA_1"/>
    <property type="match status" value="1"/>
</dbReference>
<dbReference type="PROSITE" id="PS50162">
    <property type="entry name" value="RECA_2"/>
    <property type="match status" value="1"/>
</dbReference>
<dbReference type="PROSITE" id="PS50163">
    <property type="entry name" value="RECA_3"/>
    <property type="match status" value="1"/>
</dbReference>
<evidence type="ECO:0000255" key="1">
    <source>
        <dbReference type="HAMAP-Rule" id="MF_00268"/>
    </source>
</evidence>
<reference key="1">
    <citation type="journal article" date="2006" name="J. Bacteriol.">
        <title>Complete genome sequence of Yersinia pestis strains Antiqua and Nepal516: evidence of gene reduction in an emerging pathogen.</title>
        <authorList>
            <person name="Chain P.S.G."/>
            <person name="Hu P."/>
            <person name="Malfatti S.A."/>
            <person name="Radnedge L."/>
            <person name="Larimer F."/>
            <person name="Vergez L.M."/>
            <person name="Worsham P."/>
            <person name="Chu M.C."/>
            <person name="Andersen G.L."/>
        </authorList>
    </citation>
    <scope>NUCLEOTIDE SEQUENCE [LARGE SCALE GENOMIC DNA]</scope>
    <source>
        <strain>Nepal516</strain>
    </source>
</reference>
<reference key="2">
    <citation type="submission" date="2009-04" db="EMBL/GenBank/DDBJ databases">
        <title>Yersinia pestis Nepal516A whole genome shotgun sequencing project.</title>
        <authorList>
            <person name="Plunkett G. III"/>
            <person name="Anderson B.D."/>
            <person name="Baumler D.J."/>
            <person name="Burland V."/>
            <person name="Cabot E.L."/>
            <person name="Glasner J.D."/>
            <person name="Mau B."/>
            <person name="Neeno-Eckwall E."/>
            <person name="Perna N.T."/>
            <person name="Munk A.C."/>
            <person name="Tapia R."/>
            <person name="Green L.D."/>
            <person name="Rogers Y.C."/>
            <person name="Detter J.C."/>
            <person name="Bruce D.C."/>
            <person name="Brettin T.S."/>
        </authorList>
    </citation>
    <scope>NUCLEOTIDE SEQUENCE [LARGE SCALE GENOMIC DNA]</scope>
    <source>
        <strain>Nepal516</strain>
    </source>
</reference>
<comment type="function">
    <text evidence="1">Can catalyze the hydrolysis of ATP in the presence of single-stranded DNA, the ATP-dependent uptake of single-stranded DNA by duplex DNA, and the ATP-dependent hybridization of homologous single-stranded DNAs. It interacts with LexA causing its activation and leading to its autocatalytic cleavage.</text>
</comment>
<comment type="subcellular location">
    <subcellularLocation>
        <location evidence="1">Cytoplasm</location>
    </subcellularLocation>
</comment>
<comment type="similarity">
    <text evidence="1">Belongs to the RecA family.</text>
</comment>
<protein>
    <recommendedName>
        <fullName evidence="1">Protein RecA</fullName>
    </recommendedName>
    <alternativeName>
        <fullName evidence="1">Recombinase A</fullName>
    </alternativeName>
</protein>
<sequence length="356" mass="37886">MAIDENKQKALAAALGQIEKQFGKGSIMRLGEDRSMDVETISTGSLSLDIALGAGGLPMGRIVEIYGPESSGKTTLTLQVIAAAQREGKTCAFIDAEHALDPIYAKKLGVDIDNLLCSQPDTGEQALEICDALTRSGAVDVIIVDSVAALTPKAEIEGEIGDSHMGLAARMMSQAMRKLAGNLKNANTLLIFINQIRMKIGVMFGNPETTTGGNALKFYASVRLDIRRIGAVKDGDVVVGSETRVKVVKNKIAAPFKQAEFQILYGEGININGELVDLGVKHKLIEKAGAWYSYNGDKIGQGKANASNYLKENPAIAAELDKKLREMLLNGGNGEQPVAAATAEFADGADETNEEF</sequence>
<name>RECA_YERPN</name>
<accession>Q1CLL1</accession>
<accession>C4GPY0</accession>
<feature type="chain" id="PRO_1000048036" description="Protein RecA">
    <location>
        <begin position="1"/>
        <end position="356"/>
    </location>
</feature>
<feature type="binding site" evidence="1">
    <location>
        <begin position="67"/>
        <end position="74"/>
    </location>
    <ligand>
        <name>ATP</name>
        <dbReference type="ChEBI" id="CHEBI:30616"/>
    </ligand>
</feature>
<organism>
    <name type="scientific">Yersinia pestis bv. Antiqua (strain Nepal516)</name>
    <dbReference type="NCBI Taxonomy" id="377628"/>
    <lineage>
        <taxon>Bacteria</taxon>
        <taxon>Pseudomonadati</taxon>
        <taxon>Pseudomonadota</taxon>
        <taxon>Gammaproteobacteria</taxon>
        <taxon>Enterobacterales</taxon>
        <taxon>Yersiniaceae</taxon>
        <taxon>Yersinia</taxon>
    </lineage>
</organism>
<keyword id="KW-0067">ATP-binding</keyword>
<keyword id="KW-0963">Cytoplasm</keyword>
<keyword id="KW-0227">DNA damage</keyword>
<keyword id="KW-0233">DNA recombination</keyword>
<keyword id="KW-0234">DNA repair</keyword>
<keyword id="KW-0238">DNA-binding</keyword>
<keyword id="KW-0547">Nucleotide-binding</keyword>
<keyword id="KW-0742">SOS response</keyword>
<proteinExistence type="inferred from homology"/>